<keyword id="KW-1003">Cell membrane</keyword>
<keyword id="KW-0472">Membrane</keyword>
<keyword id="KW-1185">Reference proteome</keyword>
<keyword id="KW-0812">Transmembrane</keyword>
<keyword id="KW-1133">Transmembrane helix</keyword>
<name>Y1737_HAEIN</name>
<gene>
    <name type="ordered locus">HI_1737</name>
</gene>
<protein>
    <recommendedName>
        <fullName>Uncharacterized protein HI_1737</fullName>
    </recommendedName>
</protein>
<proteinExistence type="inferred from homology"/>
<reference key="1">
    <citation type="journal article" date="1995" name="Science">
        <title>Whole-genome random sequencing and assembly of Haemophilus influenzae Rd.</title>
        <authorList>
            <person name="Fleischmann R.D."/>
            <person name="Adams M.D."/>
            <person name="White O."/>
            <person name="Clayton R.A."/>
            <person name="Kirkness E.F."/>
            <person name="Kerlavage A.R."/>
            <person name="Bult C.J."/>
            <person name="Tomb J.-F."/>
            <person name="Dougherty B.A."/>
            <person name="Merrick J.M."/>
            <person name="McKenney K."/>
            <person name="Sutton G.G."/>
            <person name="FitzHugh W."/>
            <person name="Fields C.A."/>
            <person name="Gocayne J.D."/>
            <person name="Scott J.D."/>
            <person name="Shirley R."/>
            <person name="Liu L.-I."/>
            <person name="Glodek A."/>
            <person name="Kelley J.M."/>
            <person name="Weidman J.F."/>
            <person name="Phillips C.A."/>
            <person name="Spriggs T."/>
            <person name="Hedblom E."/>
            <person name="Cotton M.D."/>
            <person name="Utterback T.R."/>
            <person name="Hanna M.C."/>
            <person name="Nguyen D.T."/>
            <person name="Saudek D.M."/>
            <person name="Brandon R.C."/>
            <person name="Fine L.D."/>
            <person name="Fritchman J.L."/>
            <person name="Fuhrmann J.L."/>
            <person name="Geoghagen N.S.M."/>
            <person name="Gnehm C.L."/>
            <person name="McDonald L.A."/>
            <person name="Small K.V."/>
            <person name="Fraser C.M."/>
            <person name="Smith H.O."/>
            <person name="Venter J.C."/>
        </authorList>
    </citation>
    <scope>NUCLEOTIDE SEQUENCE [LARGE SCALE GENOMIC DNA]</scope>
    <source>
        <strain>ATCC 51907 / DSM 11121 / KW20 / Rd</strain>
    </source>
</reference>
<comment type="subcellular location">
    <subcellularLocation>
        <location evidence="2">Cell membrane</location>
        <topology evidence="2">Multi-pass membrane protein</topology>
    </subcellularLocation>
</comment>
<comment type="similarity">
    <text evidence="2">Belongs to the AzlD/HI_1737/HP1330 family.</text>
</comment>
<dbReference type="EMBL" id="L42023">
    <property type="protein sequence ID" value="AAC23381.1"/>
    <property type="molecule type" value="Genomic_DNA"/>
</dbReference>
<dbReference type="PIR" id="E64041">
    <property type="entry name" value="E64041"/>
</dbReference>
<dbReference type="RefSeq" id="NP_439879.1">
    <property type="nucleotide sequence ID" value="NC_000907.1"/>
</dbReference>
<dbReference type="SMR" id="P44301"/>
<dbReference type="STRING" id="71421.HI_1737"/>
<dbReference type="EnsemblBacteria" id="AAC23381">
    <property type="protein sequence ID" value="AAC23381"/>
    <property type="gene ID" value="HI_1737"/>
</dbReference>
<dbReference type="KEGG" id="hin:HI_1737"/>
<dbReference type="PATRIC" id="fig|71421.8.peg.1818"/>
<dbReference type="eggNOG" id="COG1687">
    <property type="taxonomic scope" value="Bacteria"/>
</dbReference>
<dbReference type="HOGENOM" id="CLU_144816_1_1_6"/>
<dbReference type="OrthoDB" id="5324916at2"/>
<dbReference type="PhylomeDB" id="P44301"/>
<dbReference type="BioCyc" id="HINF71421:G1GJ1-1753-MONOMER"/>
<dbReference type="Proteomes" id="UP000000579">
    <property type="component" value="Chromosome"/>
</dbReference>
<dbReference type="GO" id="GO:0005886">
    <property type="term" value="C:plasma membrane"/>
    <property type="evidence" value="ECO:0007669"/>
    <property type="project" value="UniProtKB-SubCell"/>
</dbReference>
<dbReference type="InterPro" id="IPR008407">
    <property type="entry name" value="Brnchd-chn_aa_trnsp_AzlD"/>
</dbReference>
<dbReference type="Pfam" id="PF05437">
    <property type="entry name" value="AzlD"/>
    <property type="match status" value="1"/>
</dbReference>
<dbReference type="PIRSF" id="PIRSF003203">
    <property type="entry name" value="AzlD"/>
    <property type="match status" value="1"/>
</dbReference>
<feature type="chain" id="PRO_0000078112" description="Uncharacterized protein HI_1737">
    <location>
        <begin position="1"/>
        <end position="109"/>
    </location>
</feature>
<feature type="transmembrane region" description="Helical" evidence="1">
    <location>
        <begin position="7"/>
        <end position="27"/>
    </location>
</feature>
<feature type="transmembrane region" description="Helical" evidence="1">
    <location>
        <begin position="37"/>
        <end position="57"/>
    </location>
</feature>
<feature type="transmembrane region" description="Helical" evidence="1">
    <location>
        <begin position="63"/>
        <end position="83"/>
    </location>
</feature>
<accession>P44301</accession>
<organism>
    <name type="scientific">Haemophilus influenzae (strain ATCC 51907 / DSM 11121 / KW20 / Rd)</name>
    <dbReference type="NCBI Taxonomy" id="71421"/>
    <lineage>
        <taxon>Bacteria</taxon>
        <taxon>Pseudomonadati</taxon>
        <taxon>Pseudomonadota</taxon>
        <taxon>Gammaproteobacteria</taxon>
        <taxon>Pasteurellales</taxon>
        <taxon>Pasteurellaceae</taxon>
        <taxon>Haemophilus</taxon>
    </lineage>
</organism>
<evidence type="ECO:0000255" key="1"/>
<evidence type="ECO:0000305" key="2"/>
<sequence length="109" mass="12423">MTLIEQIITIGICIVAVQFTRLLPFFVFPVNRPIPQYIRYLGKVLPPAMFGMLVVYCYKNIEILTGYHGIPDLLAGIVVLGLHFWKKNMFLSIAVGTLFYMALVQLIFI</sequence>